<comment type="function">
    <text evidence="1">Necessary for normal cell division and for the maintenance of normal septation.</text>
</comment>
<comment type="cofactor">
    <cofactor evidence="1">
        <name>Mg(2+)</name>
        <dbReference type="ChEBI" id="CHEBI:18420"/>
    </cofactor>
</comment>
<comment type="similarity">
    <text evidence="1">Belongs to the TRAFAC class TrmE-Era-EngA-EngB-Septin-like GTPase superfamily. EngB GTPase family.</text>
</comment>
<organism>
    <name type="scientific">Salmonella choleraesuis (strain SC-B67)</name>
    <dbReference type="NCBI Taxonomy" id="321314"/>
    <lineage>
        <taxon>Bacteria</taxon>
        <taxon>Pseudomonadati</taxon>
        <taxon>Pseudomonadota</taxon>
        <taxon>Gammaproteobacteria</taxon>
        <taxon>Enterobacterales</taxon>
        <taxon>Enterobacteriaceae</taxon>
        <taxon>Salmonella</taxon>
    </lineage>
</organism>
<protein>
    <recommendedName>
        <fullName evidence="1">Probable GTP-binding protein EngB</fullName>
    </recommendedName>
</protein>
<name>ENGB_SALCH</name>
<proteinExistence type="inferred from homology"/>
<keyword id="KW-0131">Cell cycle</keyword>
<keyword id="KW-0132">Cell division</keyword>
<keyword id="KW-0342">GTP-binding</keyword>
<keyword id="KW-0460">Magnesium</keyword>
<keyword id="KW-0479">Metal-binding</keyword>
<keyword id="KW-0547">Nucleotide-binding</keyword>
<keyword id="KW-0717">Septation</keyword>
<sequence>MTNLNYQQTHFVMSAPDIRHLPSDCGIEVAFAGRSNAGKSSALNTLTNQKSLARTSKTPGRTQLINLFEVVDGKRLVDLPGYGYAEVPEEMKRKWQRALGEYLEKRQSLQGLVVLMDIRHPLKDLDQQMIQWAVESNIQVLVLLTKADKLASGARKAQLNMVREAVLAFNGDVQVEAFSSLKKQGVDKLRQKLDSWFSELAPVEEIQDGE</sequence>
<gene>
    <name evidence="1" type="primary">engB</name>
    <name type="ordered locus">SCH_3893</name>
</gene>
<evidence type="ECO:0000255" key="1">
    <source>
        <dbReference type="HAMAP-Rule" id="MF_00321"/>
    </source>
</evidence>
<reference key="1">
    <citation type="journal article" date="2005" name="Nucleic Acids Res.">
        <title>The genome sequence of Salmonella enterica serovar Choleraesuis, a highly invasive and resistant zoonotic pathogen.</title>
        <authorList>
            <person name="Chiu C.-H."/>
            <person name="Tang P."/>
            <person name="Chu C."/>
            <person name="Hu S."/>
            <person name="Bao Q."/>
            <person name="Yu J."/>
            <person name="Chou Y.-Y."/>
            <person name="Wang H.-S."/>
            <person name="Lee Y.-S."/>
        </authorList>
    </citation>
    <scope>NUCLEOTIDE SEQUENCE [LARGE SCALE GENOMIC DNA]</scope>
    <source>
        <strain>SC-B67</strain>
    </source>
</reference>
<accession>Q57HL3</accession>
<dbReference type="EMBL" id="AE017220">
    <property type="protein sequence ID" value="AAX67799.1"/>
    <property type="molecule type" value="Genomic_DNA"/>
</dbReference>
<dbReference type="SMR" id="Q57HL3"/>
<dbReference type="KEGG" id="sec:SCH_3893"/>
<dbReference type="HOGENOM" id="CLU_033732_1_0_6"/>
<dbReference type="Proteomes" id="UP000000538">
    <property type="component" value="Chromosome"/>
</dbReference>
<dbReference type="GO" id="GO:0005829">
    <property type="term" value="C:cytosol"/>
    <property type="evidence" value="ECO:0007669"/>
    <property type="project" value="TreeGrafter"/>
</dbReference>
<dbReference type="GO" id="GO:0005525">
    <property type="term" value="F:GTP binding"/>
    <property type="evidence" value="ECO:0007669"/>
    <property type="project" value="UniProtKB-UniRule"/>
</dbReference>
<dbReference type="GO" id="GO:0046872">
    <property type="term" value="F:metal ion binding"/>
    <property type="evidence" value="ECO:0007669"/>
    <property type="project" value="UniProtKB-KW"/>
</dbReference>
<dbReference type="GO" id="GO:0000917">
    <property type="term" value="P:division septum assembly"/>
    <property type="evidence" value="ECO:0007669"/>
    <property type="project" value="UniProtKB-KW"/>
</dbReference>
<dbReference type="CDD" id="cd01876">
    <property type="entry name" value="YihA_EngB"/>
    <property type="match status" value="1"/>
</dbReference>
<dbReference type="FunFam" id="3.40.50.300:FF:000098">
    <property type="entry name" value="Probable GTP-binding protein EngB"/>
    <property type="match status" value="1"/>
</dbReference>
<dbReference type="Gene3D" id="3.40.50.300">
    <property type="entry name" value="P-loop containing nucleotide triphosphate hydrolases"/>
    <property type="match status" value="1"/>
</dbReference>
<dbReference type="HAMAP" id="MF_00321">
    <property type="entry name" value="GTPase_EngB"/>
    <property type="match status" value="1"/>
</dbReference>
<dbReference type="InterPro" id="IPR030393">
    <property type="entry name" value="G_ENGB_dom"/>
</dbReference>
<dbReference type="InterPro" id="IPR006073">
    <property type="entry name" value="GTP-bd"/>
</dbReference>
<dbReference type="InterPro" id="IPR019987">
    <property type="entry name" value="GTP-bd_ribosome_bio_YsxC"/>
</dbReference>
<dbReference type="InterPro" id="IPR027417">
    <property type="entry name" value="P-loop_NTPase"/>
</dbReference>
<dbReference type="NCBIfam" id="TIGR03598">
    <property type="entry name" value="GTPase_YsxC"/>
    <property type="match status" value="1"/>
</dbReference>
<dbReference type="PANTHER" id="PTHR11649:SF13">
    <property type="entry name" value="ENGB-TYPE G DOMAIN-CONTAINING PROTEIN"/>
    <property type="match status" value="1"/>
</dbReference>
<dbReference type="PANTHER" id="PTHR11649">
    <property type="entry name" value="MSS1/TRME-RELATED GTP-BINDING PROTEIN"/>
    <property type="match status" value="1"/>
</dbReference>
<dbReference type="Pfam" id="PF01926">
    <property type="entry name" value="MMR_HSR1"/>
    <property type="match status" value="1"/>
</dbReference>
<dbReference type="SUPFAM" id="SSF52540">
    <property type="entry name" value="P-loop containing nucleoside triphosphate hydrolases"/>
    <property type="match status" value="1"/>
</dbReference>
<dbReference type="PROSITE" id="PS51706">
    <property type="entry name" value="G_ENGB"/>
    <property type="match status" value="1"/>
</dbReference>
<feature type="chain" id="PRO_0000266940" description="Probable GTP-binding protein EngB">
    <location>
        <begin position="1"/>
        <end position="210"/>
    </location>
</feature>
<feature type="domain" description="EngB-type G" evidence="1">
    <location>
        <begin position="25"/>
        <end position="199"/>
    </location>
</feature>
<feature type="binding site" evidence="1">
    <location>
        <begin position="33"/>
        <end position="40"/>
    </location>
    <ligand>
        <name>GTP</name>
        <dbReference type="ChEBI" id="CHEBI:37565"/>
    </ligand>
</feature>
<feature type="binding site" evidence="1">
    <location>
        <position position="40"/>
    </location>
    <ligand>
        <name>Mg(2+)</name>
        <dbReference type="ChEBI" id="CHEBI:18420"/>
    </ligand>
</feature>
<feature type="binding site" evidence="1">
    <location>
        <begin position="60"/>
        <end position="64"/>
    </location>
    <ligand>
        <name>GTP</name>
        <dbReference type="ChEBI" id="CHEBI:37565"/>
    </ligand>
</feature>
<feature type="binding site" evidence="1">
    <location>
        <position position="62"/>
    </location>
    <ligand>
        <name>Mg(2+)</name>
        <dbReference type="ChEBI" id="CHEBI:18420"/>
    </ligand>
</feature>
<feature type="binding site" evidence="1">
    <location>
        <begin position="78"/>
        <end position="81"/>
    </location>
    <ligand>
        <name>GTP</name>
        <dbReference type="ChEBI" id="CHEBI:37565"/>
    </ligand>
</feature>
<feature type="binding site" evidence="1">
    <location>
        <begin position="145"/>
        <end position="148"/>
    </location>
    <ligand>
        <name>GTP</name>
        <dbReference type="ChEBI" id="CHEBI:37565"/>
    </ligand>
</feature>
<feature type="binding site" evidence="1">
    <location>
        <begin position="178"/>
        <end position="180"/>
    </location>
    <ligand>
        <name>GTP</name>
        <dbReference type="ChEBI" id="CHEBI:37565"/>
    </ligand>
</feature>